<dbReference type="EMBL" id="AC000348">
    <property type="protein sequence ID" value="AAF79854.1"/>
    <property type="status" value="ALT_SEQ"/>
    <property type="molecule type" value="Genomic_DNA"/>
</dbReference>
<dbReference type="EMBL" id="CP002684">
    <property type="protein sequence ID" value="AEE30773.1"/>
    <property type="molecule type" value="Genomic_DNA"/>
</dbReference>
<dbReference type="SMR" id="P0CJ65"/>
<dbReference type="FunCoup" id="P0CJ65">
    <property type="interactions" value="18"/>
</dbReference>
<dbReference type="STRING" id="3702.P0CJ65"/>
<dbReference type="PaxDb" id="3702-AT1G27045.1"/>
<dbReference type="EnsemblPlants" id="AT1G27045.1">
    <property type="protein sequence ID" value="AT1G27045.1"/>
    <property type="gene ID" value="AT1G27045"/>
</dbReference>
<dbReference type="Gramene" id="AT1G27045.1">
    <property type="protein sequence ID" value="AT1G27045.1"/>
    <property type="gene ID" value="AT1G27045"/>
</dbReference>
<dbReference type="KEGG" id="ath:AT1G27045"/>
<dbReference type="Araport" id="AT1G27045"/>
<dbReference type="TAIR" id="AT1G27045">
    <property type="gene designation" value="ATHB54"/>
</dbReference>
<dbReference type="eggNOG" id="KOG0483">
    <property type="taxonomic scope" value="Eukaryota"/>
</dbReference>
<dbReference type="HOGENOM" id="CLU_1456415_0_0_1"/>
<dbReference type="InParanoid" id="P0CJ65"/>
<dbReference type="PhylomeDB" id="P0CJ65"/>
<dbReference type="PRO" id="PR:P0CJ65"/>
<dbReference type="Proteomes" id="UP000006548">
    <property type="component" value="Chromosome 1"/>
</dbReference>
<dbReference type="ExpressionAtlas" id="P0CJ65">
    <property type="expression patterns" value="baseline and differential"/>
</dbReference>
<dbReference type="GO" id="GO:0005634">
    <property type="term" value="C:nucleus"/>
    <property type="evidence" value="ECO:0007669"/>
    <property type="project" value="UniProtKB-SubCell"/>
</dbReference>
<dbReference type="GO" id="GO:0000981">
    <property type="term" value="F:DNA-binding transcription factor activity, RNA polymerase II-specific"/>
    <property type="evidence" value="ECO:0007669"/>
    <property type="project" value="InterPro"/>
</dbReference>
<dbReference type="GO" id="GO:0043565">
    <property type="term" value="F:sequence-specific DNA binding"/>
    <property type="evidence" value="ECO:0007669"/>
    <property type="project" value="InterPro"/>
</dbReference>
<dbReference type="CDD" id="cd00086">
    <property type="entry name" value="homeodomain"/>
    <property type="match status" value="1"/>
</dbReference>
<dbReference type="FunFam" id="1.10.10.60:FF:000533">
    <property type="entry name" value="Homeobox-leucine zipper protein ATHB-52"/>
    <property type="match status" value="1"/>
</dbReference>
<dbReference type="Gene3D" id="1.10.10.60">
    <property type="entry name" value="Homeodomain-like"/>
    <property type="match status" value="1"/>
</dbReference>
<dbReference type="InterPro" id="IPR001356">
    <property type="entry name" value="HD"/>
</dbReference>
<dbReference type="InterPro" id="IPR045224">
    <property type="entry name" value="HDZip_class_I_plant"/>
</dbReference>
<dbReference type="InterPro" id="IPR017970">
    <property type="entry name" value="Homeobox_CS"/>
</dbReference>
<dbReference type="InterPro" id="IPR009057">
    <property type="entry name" value="Homeodomain-like_sf"/>
</dbReference>
<dbReference type="InterPro" id="IPR000047">
    <property type="entry name" value="HTH_motif"/>
</dbReference>
<dbReference type="InterPro" id="IPR003106">
    <property type="entry name" value="Leu_zip_homeo"/>
</dbReference>
<dbReference type="PANTHER" id="PTHR24326">
    <property type="entry name" value="HOMEOBOX-LEUCINE ZIPPER PROTEIN"/>
    <property type="match status" value="1"/>
</dbReference>
<dbReference type="PANTHER" id="PTHR24326:SF606">
    <property type="entry name" value="HOMEOBOX-LEUCINE ZIPPER PROTEIN ATHB-54"/>
    <property type="match status" value="1"/>
</dbReference>
<dbReference type="Pfam" id="PF02183">
    <property type="entry name" value="HALZ"/>
    <property type="match status" value="1"/>
</dbReference>
<dbReference type="Pfam" id="PF00046">
    <property type="entry name" value="Homeodomain"/>
    <property type="match status" value="1"/>
</dbReference>
<dbReference type="PRINTS" id="PR00031">
    <property type="entry name" value="HTHREPRESSR"/>
</dbReference>
<dbReference type="SMART" id="SM00389">
    <property type="entry name" value="HOX"/>
    <property type="match status" value="1"/>
</dbReference>
<dbReference type="SUPFAM" id="SSF46689">
    <property type="entry name" value="Homeodomain-like"/>
    <property type="match status" value="1"/>
</dbReference>
<dbReference type="PROSITE" id="PS00027">
    <property type="entry name" value="HOMEOBOX_1"/>
    <property type="match status" value="1"/>
</dbReference>
<dbReference type="PROSITE" id="PS50071">
    <property type="entry name" value="HOMEOBOX_2"/>
    <property type="match status" value="1"/>
</dbReference>
<reference key="1">
    <citation type="journal article" date="2000" name="Nature">
        <title>Sequence and analysis of chromosome 1 of the plant Arabidopsis thaliana.</title>
        <authorList>
            <person name="Theologis A."/>
            <person name="Ecker J.R."/>
            <person name="Palm C.J."/>
            <person name="Federspiel N.A."/>
            <person name="Kaul S."/>
            <person name="White O."/>
            <person name="Alonso J."/>
            <person name="Altafi H."/>
            <person name="Araujo R."/>
            <person name="Bowman C.L."/>
            <person name="Brooks S.Y."/>
            <person name="Buehler E."/>
            <person name="Chan A."/>
            <person name="Chao Q."/>
            <person name="Chen H."/>
            <person name="Cheuk R.F."/>
            <person name="Chin C.W."/>
            <person name="Chung M.K."/>
            <person name="Conn L."/>
            <person name="Conway A.B."/>
            <person name="Conway A.R."/>
            <person name="Creasy T.H."/>
            <person name="Dewar K."/>
            <person name="Dunn P."/>
            <person name="Etgu P."/>
            <person name="Feldblyum T.V."/>
            <person name="Feng J.-D."/>
            <person name="Fong B."/>
            <person name="Fujii C.Y."/>
            <person name="Gill J.E."/>
            <person name="Goldsmith A.D."/>
            <person name="Haas B."/>
            <person name="Hansen N.F."/>
            <person name="Hughes B."/>
            <person name="Huizar L."/>
            <person name="Hunter J.L."/>
            <person name="Jenkins J."/>
            <person name="Johnson-Hopson C."/>
            <person name="Khan S."/>
            <person name="Khaykin E."/>
            <person name="Kim C.J."/>
            <person name="Koo H.L."/>
            <person name="Kremenetskaia I."/>
            <person name="Kurtz D.B."/>
            <person name="Kwan A."/>
            <person name="Lam B."/>
            <person name="Langin-Hooper S."/>
            <person name="Lee A."/>
            <person name="Lee J.M."/>
            <person name="Lenz C.A."/>
            <person name="Li J.H."/>
            <person name="Li Y.-P."/>
            <person name="Lin X."/>
            <person name="Liu S.X."/>
            <person name="Liu Z.A."/>
            <person name="Luros J.S."/>
            <person name="Maiti R."/>
            <person name="Marziali A."/>
            <person name="Militscher J."/>
            <person name="Miranda M."/>
            <person name="Nguyen M."/>
            <person name="Nierman W.C."/>
            <person name="Osborne B.I."/>
            <person name="Pai G."/>
            <person name="Peterson J."/>
            <person name="Pham P.K."/>
            <person name="Rizzo M."/>
            <person name="Rooney T."/>
            <person name="Rowley D."/>
            <person name="Sakano H."/>
            <person name="Salzberg S.L."/>
            <person name="Schwartz J.R."/>
            <person name="Shinn P."/>
            <person name="Southwick A.M."/>
            <person name="Sun H."/>
            <person name="Tallon L.J."/>
            <person name="Tambunga G."/>
            <person name="Toriumi M.J."/>
            <person name="Town C.D."/>
            <person name="Utterback T."/>
            <person name="Van Aken S."/>
            <person name="Vaysberg M."/>
            <person name="Vysotskaia V.S."/>
            <person name="Walker M."/>
            <person name="Wu D."/>
            <person name="Yu G."/>
            <person name="Fraser C.M."/>
            <person name="Venter J.C."/>
            <person name="Davis R.W."/>
        </authorList>
    </citation>
    <scope>NUCLEOTIDE SEQUENCE [LARGE SCALE GENOMIC DNA]</scope>
    <source>
        <strain>cv. Columbia</strain>
    </source>
</reference>
<reference key="2">
    <citation type="journal article" date="2017" name="Plant J.">
        <title>Araport11: a complete reannotation of the Arabidopsis thaliana reference genome.</title>
        <authorList>
            <person name="Cheng C.Y."/>
            <person name="Krishnakumar V."/>
            <person name="Chan A.P."/>
            <person name="Thibaud-Nissen F."/>
            <person name="Schobel S."/>
            <person name="Town C.D."/>
        </authorList>
    </citation>
    <scope>GENOME REANNOTATION</scope>
    <source>
        <strain>cv. Columbia</strain>
    </source>
</reference>
<reference key="3">
    <citation type="journal article" date="2005" name="Plant Physiol.">
        <title>Homeodomain leucine zipper class I genes in Arabidopsis. Expression patterns and phylogenetic relationships.</title>
        <authorList>
            <person name="Henriksson E."/>
            <person name="Olsson A.S.B."/>
            <person name="Johannesson H."/>
            <person name="Johansson H."/>
            <person name="Hanson J."/>
            <person name="Engstroem P."/>
            <person name="Soederman E."/>
        </authorList>
    </citation>
    <scope>GENE FAMILY</scope>
    <scope>TISSUE SPECIFICITY</scope>
</reference>
<accession>P0CJ65</accession>
<accession>Q9LFY2</accession>
<sequence length="227" mass="26624">MENSDTDSEVFFWFQNQNQNHSHKFPSSCFPPSSHSAFYGSSSMINTETATMDEEDVCESYMMREITKKRKLTPIQLRLLEESFEEEKRLEPDRKLWLAEKLGLQPSQVAVWFQNRRARYKTKQLEHDCDSLKASYAKLKTDWDILFVQNQTLKSKVDLLKEKLKMQENLETQSIERKRLGEEGSSVKSDNTQYSEEEGLENQYSFPELAVLGFYYDPTLTASNLRL</sequence>
<protein>
    <recommendedName>
        <fullName>Homeobox-leucine zipper protein ATHB-54</fullName>
    </recommendedName>
    <alternativeName>
        <fullName>HD-ZIP protein ATHB-54</fullName>
    </alternativeName>
    <alternativeName>
        <fullName>Homeodomain transcription factor ATHB-54</fullName>
    </alternativeName>
</protein>
<name>ATB54_ARATH</name>
<keyword id="KW-0238">DNA-binding</keyword>
<keyword id="KW-0371">Homeobox</keyword>
<keyword id="KW-0539">Nucleus</keyword>
<keyword id="KW-1185">Reference proteome</keyword>
<keyword id="KW-0804">Transcription</keyword>
<keyword id="KW-0805">Transcription regulation</keyword>
<evidence type="ECO:0000250" key="1"/>
<evidence type="ECO:0000255" key="2">
    <source>
        <dbReference type="PROSITE-ProRule" id="PRU00108"/>
    </source>
</evidence>
<evidence type="ECO:0000256" key="3">
    <source>
        <dbReference type="SAM" id="MobiDB-lite"/>
    </source>
</evidence>
<evidence type="ECO:0000269" key="4">
    <source>
    </source>
</evidence>
<evidence type="ECO:0000305" key="5"/>
<gene>
    <name type="primary">ATHB-54</name>
    <name type="ordered locus">At1g27045</name>
    <name type="ORF">T7N9.11</name>
</gene>
<proteinExistence type="evidence at transcript level"/>
<comment type="function">
    <text evidence="1">Probable transcription factor.</text>
</comment>
<comment type="subcellular location">
    <subcellularLocation>
        <location evidence="5">Nucleus</location>
    </subcellularLocation>
</comment>
<comment type="tissue specificity">
    <text evidence="4">Predominantly expressed in flowers and siliques.</text>
</comment>
<comment type="similarity">
    <text evidence="5">Belongs to the HD-ZIP homeobox family. Class I subfamily.</text>
</comment>
<comment type="sequence caution" evidence="5">
    <conflict type="erroneous gene model prediction">
        <sequence resource="EMBL-CDS" id="AAF79854"/>
    </conflict>
    <text>The predicted gene has been split into 2 genes: At1g27045 and At1g27050.</text>
</comment>
<feature type="chain" id="PRO_0000257805" description="Homeobox-leucine zipper protein ATHB-54">
    <location>
        <begin position="1"/>
        <end position="227"/>
    </location>
</feature>
<feature type="DNA-binding region" description="Homeobox" evidence="2">
    <location>
        <begin position="65"/>
        <end position="124"/>
    </location>
</feature>
<feature type="region of interest" description="Leucine-zipper">
    <location>
        <begin position="125"/>
        <end position="153"/>
    </location>
</feature>
<feature type="region of interest" description="Disordered" evidence="3">
    <location>
        <begin position="175"/>
        <end position="198"/>
    </location>
</feature>
<organism>
    <name type="scientific">Arabidopsis thaliana</name>
    <name type="common">Mouse-ear cress</name>
    <dbReference type="NCBI Taxonomy" id="3702"/>
    <lineage>
        <taxon>Eukaryota</taxon>
        <taxon>Viridiplantae</taxon>
        <taxon>Streptophyta</taxon>
        <taxon>Embryophyta</taxon>
        <taxon>Tracheophyta</taxon>
        <taxon>Spermatophyta</taxon>
        <taxon>Magnoliopsida</taxon>
        <taxon>eudicotyledons</taxon>
        <taxon>Gunneridae</taxon>
        <taxon>Pentapetalae</taxon>
        <taxon>rosids</taxon>
        <taxon>malvids</taxon>
        <taxon>Brassicales</taxon>
        <taxon>Brassicaceae</taxon>
        <taxon>Camelineae</taxon>
        <taxon>Arabidopsis</taxon>
    </lineage>
</organism>